<keyword id="KW-0150">Chloroplast</keyword>
<keyword id="KW-0249">Electron transport</keyword>
<keyword id="KW-0349">Heme</keyword>
<keyword id="KW-0408">Iron</keyword>
<keyword id="KW-0472">Membrane</keyword>
<keyword id="KW-0479">Metal-binding</keyword>
<keyword id="KW-0602">Photosynthesis</keyword>
<keyword id="KW-0934">Plastid</keyword>
<keyword id="KW-1185">Reference proteome</keyword>
<keyword id="KW-0732">Signal</keyword>
<keyword id="KW-0793">Thylakoid</keyword>
<keyword id="KW-0812">Transmembrane</keyword>
<keyword id="KW-1133">Transmembrane helix</keyword>
<keyword id="KW-0813">Transport</keyword>
<accession>P49161</accession>
<accession>Q2PMS1</accession>
<feature type="signal peptide" evidence="1">
    <location>
        <begin position="1"/>
        <end position="35"/>
    </location>
</feature>
<feature type="chain" id="PRO_0000023836" description="Cytochrome f">
    <location>
        <begin position="36"/>
        <end position="320"/>
    </location>
</feature>
<feature type="transmembrane region" description="Helical" evidence="2">
    <location>
        <begin position="286"/>
        <end position="305"/>
    </location>
</feature>
<feature type="binding site" description="axial binding residue" evidence="1">
    <location>
        <position position="36"/>
    </location>
    <ligand>
        <name>heme</name>
        <dbReference type="ChEBI" id="CHEBI:30413"/>
    </ligand>
    <ligandPart>
        <name>Fe</name>
        <dbReference type="ChEBI" id="CHEBI:18248"/>
    </ligandPart>
</feature>
<feature type="binding site" description="covalent" evidence="1">
    <location>
        <position position="56"/>
    </location>
    <ligand>
        <name>heme</name>
        <dbReference type="ChEBI" id="CHEBI:30413"/>
    </ligand>
</feature>
<feature type="binding site" description="covalent" evidence="1">
    <location>
        <position position="59"/>
    </location>
    <ligand>
        <name>heme</name>
        <dbReference type="ChEBI" id="CHEBI:30413"/>
    </ligand>
</feature>
<feature type="binding site" description="axial binding residue" evidence="1">
    <location>
        <position position="60"/>
    </location>
    <ligand>
        <name>heme</name>
        <dbReference type="ChEBI" id="CHEBI:30413"/>
    </ligand>
    <ligandPart>
        <name>Fe</name>
        <dbReference type="ChEBI" id="CHEBI:18248"/>
    </ligandPart>
</feature>
<evidence type="ECO:0000250" key="1"/>
<evidence type="ECO:0000255" key="2"/>
<evidence type="ECO:0000305" key="3"/>
<sequence length="320" mass="35322">MQTRNAFSCIKEGITRSISISIMIYIIIRAPISNAYPIFAQQGYENPREATGRIVCANCHLANKPVDIEVPQAVLPDTVFEAVVRIPYDMQVKQVLANGKKGALNVGAVLILPEGFELAPPDRISPEIKEKIGNLSFQNYRPTKKNILVVGPVPGQKYKEITFPILSPDPTTKRDVHFLKYPIYVGGNRGRGQIYLDGSKSNNNVYNATAAGMVKKIIRKEKGGYEITIVDALDGREVIDIIPPGPELLVSEGESIKLDQPLTSNPNVGGFGQGDAEIVLQDPLRVQGLLFFFASIILAQIFLVLKKKQFEKVQLSEMNF</sequence>
<gene>
    <name type="primary">petA</name>
</gene>
<name>CYF_SOYBN</name>
<organism>
    <name type="scientific">Glycine max</name>
    <name type="common">Soybean</name>
    <name type="synonym">Glycine hispida</name>
    <dbReference type="NCBI Taxonomy" id="3847"/>
    <lineage>
        <taxon>Eukaryota</taxon>
        <taxon>Viridiplantae</taxon>
        <taxon>Streptophyta</taxon>
        <taxon>Embryophyta</taxon>
        <taxon>Tracheophyta</taxon>
        <taxon>Spermatophyta</taxon>
        <taxon>Magnoliopsida</taxon>
        <taxon>eudicotyledons</taxon>
        <taxon>Gunneridae</taxon>
        <taxon>Pentapetalae</taxon>
        <taxon>rosids</taxon>
        <taxon>fabids</taxon>
        <taxon>Fabales</taxon>
        <taxon>Fabaceae</taxon>
        <taxon>Papilionoideae</taxon>
        <taxon>50 kb inversion clade</taxon>
        <taxon>NPAAA clade</taxon>
        <taxon>indigoferoid/millettioid clade</taxon>
        <taxon>Phaseoleae</taxon>
        <taxon>Glycine</taxon>
        <taxon>Glycine subgen. Soja</taxon>
    </lineage>
</organism>
<comment type="function">
    <text evidence="1">Component of the cytochrome b6-f complex, which mediates electron transfer between photosystem II (PSII) and photosystem I (PSI), cyclic electron flow around PSI, and state transitions.</text>
</comment>
<comment type="cofactor">
    <cofactor evidence="1">
        <name>heme</name>
        <dbReference type="ChEBI" id="CHEBI:30413"/>
    </cofactor>
    <text evidence="1">Binds 1 heme group covalently.</text>
</comment>
<comment type="subunit">
    <text evidence="1">The 4 large subunits of the cytochrome b6-f complex are cytochrome b6, subunit IV (17 kDa polypeptide, petD), cytochrome f and the Rieske protein, while the 4 small subunits are PetG, PetL, PetM and PetN. The complex functions as a dimer (By similarity).</text>
</comment>
<comment type="subcellular location">
    <subcellularLocation>
        <location evidence="1">Plastid</location>
        <location evidence="1">Chloroplast thylakoid membrane</location>
        <topology evidence="1">Single-pass membrane protein</topology>
    </subcellularLocation>
</comment>
<comment type="similarity">
    <text evidence="3">Belongs to the cytochrome f family.</text>
</comment>
<geneLocation type="chloroplast"/>
<protein>
    <recommendedName>
        <fullName>Cytochrome f</fullName>
    </recommendedName>
</protein>
<proteinExistence type="inferred from homology"/>
<reference key="1">
    <citation type="online journal article" date="1995" name="Plant Gene Register">
        <title>The rps16, accD, psaI, ORF 203, ORF 151, ORF 103, ORF 229 and petA gene cluster in the chloroplast genome of soybean.</title>
        <authorList>
            <person name="Reverdatto S.V."/>
            <person name="Beilinson V."/>
            <person name="Nielsen N.C."/>
        </authorList>
        <locator>PGR95-051</locator>
    </citation>
    <scope>NUCLEOTIDE SEQUENCE [GENOMIC DNA]</scope>
    <source>
        <strain>cv. Resnik</strain>
        <tissue>Leaf</tissue>
    </source>
</reference>
<reference key="2">
    <citation type="journal article" date="2005" name="Plant Mol. Biol.">
        <title>Complete chloroplast genome sequence of Glycine max and comparative analyses with other legume genomes.</title>
        <authorList>
            <person name="Saski C."/>
            <person name="Lee S.-B."/>
            <person name="Daniell H."/>
            <person name="Wood T.C."/>
            <person name="Tomkins J."/>
            <person name="Kim H.-G."/>
            <person name="Jansen R.K."/>
        </authorList>
    </citation>
    <scope>NUCLEOTIDE SEQUENCE [LARGE SCALE GENOMIC DNA]</scope>
    <source>
        <strain>cv. PI 437654</strain>
    </source>
</reference>
<dbReference type="EMBL" id="U26948">
    <property type="protein sequence ID" value="AAA80649.1"/>
    <property type="molecule type" value="Genomic_DNA"/>
</dbReference>
<dbReference type="EMBL" id="DQ317523">
    <property type="protein sequence ID" value="ABC25137.1"/>
    <property type="molecule type" value="Genomic_DNA"/>
</dbReference>
<dbReference type="PIR" id="T06347">
    <property type="entry name" value="T06347"/>
</dbReference>
<dbReference type="RefSeq" id="YP_538777.1">
    <property type="nucleotide sequence ID" value="NC_007942.1"/>
</dbReference>
<dbReference type="SMR" id="P49161"/>
<dbReference type="FunCoup" id="P49161">
    <property type="interactions" value="618"/>
</dbReference>
<dbReference type="STRING" id="3847.P49161"/>
<dbReference type="PaxDb" id="3847-GLYMA12G36150.1"/>
<dbReference type="ProMEX" id="P49161"/>
<dbReference type="EnsemblPlants" id="KRH27390">
    <property type="protein sequence ID" value="KRH27390"/>
    <property type="gene ID" value="GLYMA_12G232900"/>
</dbReference>
<dbReference type="GeneID" id="3989309"/>
<dbReference type="Gramene" id="KRH27390">
    <property type="protein sequence ID" value="KRH27390"/>
    <property type="gene ID" value="GLYMA_12G232900"/>
</dbReference>
<dbReference type="KEGG" id="gmx:3989309"/>
<dbReference type="eggNOG" id="ENOG502QPT8">
    <property type="taxonomic scope" value="Eukaryota"/>
</dbReference>
<dbReference type="InParanoid" id="P49161"/>
<dbReference type="OMA" id="PFWAQQN"/>
<dbReference type="OrthoDB" id="1406507at2759"/>
<dbReference type="Proteomes" id="UP000008827">
    <property type="component" value="Chloroplast"/>
</dbReference>
<dbReference type="GO" id="GO:0009535">
    <property type="term" value="C:chloroplast thylakoid membrane"/>
    <property type="evidence" value="ECO:0007669"/>
    <property type="project" value="UniProtKB-SubCell"/>
</dbReference>
<dbReference type="GO" id="GO:0009055">
    <property type="term" value="F:electron transfer activity"/>
    <property type="evidence" value="ECO:0007669"/>
    <property type="project" value="UniProtKB-UniRule"/>
</dbReference>
<dbReference type="GO" id="GO:0020037">
    <property type="term" value="F:heme binding"/>
    <property type="evidence" value="ECO:0007669"/>
    <property type="project" value="InterPro"/>
</dbReference>
<dbReference type="GO" id="GO:0005506">
    <property type="term" value="F:iron ion binding"/>
    <property type="evidence" value="ECO:0007669"/>
    <property type="project" value="InterPro"/>
</dbReference>
<dbReference type="GO" id="GO:0015979">
    <property type="term" value="P:photosynthesis"/>
    <property type="evidence" value="ECO:0007669"/>
    <property type="project" value="UniProtKB-UniRule"/>
</dbReference>
<dbReference type="FunFam" id="1.20.5.700:FF:000001">
    <property type="entry name" value="Cytochrome f"/>
    <property type="match status" value="1"/>
</dbReference>
<dbReference type="FunFam" id="2.40.50.100:FF:000007">
    <property type="entry name" value="Cytochrome f"/>
    <property type="match status" value="1"/>
</dbReference>
<dbReference type="FunFam" id="2.60.40.830:FF:000001">
    <property type="entry name" value="Cytochrome f"/>
    <property type="match status" value="1"/>
</dbReference>
<dbReference type="Gene3D" id="2.40.50.100">
    <property type="match status" value="1"/>
</dbReference>
<dbReference type="Gene3D" id="2.60.40.830">
    <property type="entry name" value="Cytochrome f large domain"/>
    <property type="match status" value="1"/>
</dbReference>
<dbReference type="Gene3D" id="1.20.5.700">
    <property type="entry name" value="Single helix bin"/>
    <property type="match status" value="1"/>
</dbReference>
<dbReference type="HAMAP" id="MF_00610">
    <property type="entry name" value="Cytb6_f_cytF"/>
    <property type="match status" value="1"/>
</dbReference>
<dbReference type="InterPro" id="IPR024058">
    <property type="entry name" value="Cyt-f_TM"/>
</dbReference>
<dbReference type="InterPro" id="IPR002325">
    <property type="entry name" value="Cyt_f"/>
</dbReference>
<dbReference type="InterPro" id="IPR024094">
    <property type="entry name" value="Cyt_f_lg_dom"/>
</dbReference>
<dbReference type="InterPro" id="IPR036826">
    <property type="entry name" value="Cyt_f_lg_dom_sf"/>
</dbReference>
<dbReference type="InterPro" id="IPR011054">
    <property type="entry name" value="Rudment_hybrid_motif"/>
</dbReference>
<dbReference type="PANTHER" id="PTHR33288">
    <property type="match status" value="1"/>
</dbReference>
<dbReference type="PANTHER" id="PTHR33288:SF10">
    <property type="entry name" value="CYTOCHROME F"/>
    <property type="match status" value="1"/>
</dbReference>
<dbReference type="Pfam" id="PF01333">
    <property type="entry name" value="Apocytochr_F_C"/>
    <property type="match status" value="1"/>
</dbReference>
<dbReference type="Pfam" id="PF16639">
    <property type="entry name" value="Apocytochr_F_N"/>
    <property type="match status" value="1"/>
</dbReference>
<dbReference type="PRINTS" id="PR00610">
    <property type="entry name" value="CYTOCHROMEF"/>
</dbReference>
<dbReference type="SUPFAM" id="SSF103431">
    <property type="entry name" value="Cytochrome f subunit of the cytochrome b6f complex, transmembrane anchor"/>
    <property type="match status" value="1"/>
</dbReference>
<dbReference type="SUPFAM" id="SSF49441">
    <property type="entry name" value="Cytochrome f, large domain"/>
    <property type="match status" value="1"/>
</dbReference>
<dbReference type="SUPFAM" id="SSF51246">
    <property type="entry name" value="Rudiment single hybrid motif"/>
    <property type="match status" value="1"/>
</dbReference>
<dbReference type="PROSITE" id="PS51010">
    <property type="entry name" value="CYTF"/>
    <property type="match status" value="1"/>
</dbReference>